<name>RL20_STRCO</name>
<reference key="1">
    <citation type="journal article" date="2002" name="Nature">
        <title>Complete genome sequence of the model actinomycete Streptomyces coelicolor A3(2).</title>
        <authorList>
            <person name="Bentley S.D."/>
            <person name="Chater K.F."/>
            <person name="Cerdeno-Tarraga A.-M."/>
            <person name="Challis G.L."/>
            <person name="Thomson N.R."/>
            <person name="James K.D."/>
            <person name="Harris D.E."/>
            <person name="Quail M.A."/>
            <person name="Kieser H."/>
            <person name="Harper D."/>
            <person name="Bateman A."/>
            <person name="Brown S."/>
            <person name="Chandra G."/>
            <person name="Chen C.W."/>
            <person name="Collins M."/>
            <person name="Cronin A."/>
            <person name="Fraser A."/>
            <person name="Goble A."/>
            <person name="Hidalgo J."/>
            <person name="Hornsby T."/>
            <person name="Howarth S."/>
            <person name="Huang C.-H."/>
            <person name="Kieser T."/>
            <person name="Larke L."/>
            <person name="Murphy L.D."/>
            <person name="Oliver K."/>
            <person name="O'Neil S."/>
            <person name="Rabbinowitsch E."/>
            <person name="Rajandream M.A."/>
            <person name="Rutherford K.M."/>
            <person name="Rutter S."/>
            <person name="Seeger K."/>
            <person name="Saunders D."/>
            <person name="Sharp S."/>
            <person name="Squares R."/>
            <person name="Squares S."/>
            <person name="Taylor K."/>
            <person name="Warren T."/>
            <person name="Wietzorrek A."/>
            <person name="Woodward J.R."/>
            <person name="Barrell B.G."/>
            <person name="Parkhill J."/>
            <person name="Hopwood D.A."/>
        </authorList>
    </citation>
    <scope>NUCLEOTIDE SEQUENCE [LARGE SCALE GENOMIC DNA]</scope>
    <source>
        <strain>ATCC BAA-471 / A3(2) / M145</strain>
    </source>
</reference>
<proteinExistence type="inferred from homology"/>
<gene>
    <name type="primary">rplT</name>
    <name type="ordered locus">SCO1598</name>
    <name type="ORF">SCI35.20c</name>
</gene>
<dbReference type="EMBL" id="AL939109">
    <property type="protein sequence ID" value="CAA20809.1"/>
    <property type="molecule type" value="Genomic_DNA"/>
</dbReference>
<dbReference type="PIR" id="T36833">
    <property type="entry name" value="T36833"/>
</dbReference>
<dbReference type="RefSeq" id="NP_625874.1">
    <property type="nucleotide sequence ID" value="NC_003888.3"/>
</dbReference>
<dbReference type="RefSeq" id="WP_003977226.1">
    <property type="nucleotide sequence ID" value="NZ_VNID01000021.1"/>
</dbReference>
<dbReference type="SMR" id="O88058"/>
<dbReference type="FunCoup" id="O88058">
    <property type="interactions" value="324"/>
</dbReference>
<dbReference type="STRING" id="100226.gene:17759191"/>
<dbReference type="PaxDb" id="100226-SCO1598"/>
<dbReference type="GeneID" id="97466027"/>
<dbReference type="KEGG" id="sco:SCO1598"/>
<dbReference type="PATRIC" id="fig|100226.15.peg.1610"/>
<dbReference type="eggNOG" id="COG0292">
    <property type="taxonomic scope" value="Bacteria"/>
</dbReference>
<dbReference type="HOGENOM" id="CLU_123265_0_0_11"/>
<dbReference type="InParanoid" id="O88058"/>
<dbReference type="OrthoDB" id="9808966at2"/>
<dbReference type="PhylomeDB" id="O88058"/>
<dbReference type="Proteomes" id="UP000001973">
    <property type="component" value="Chromosome"/>
</dbReference>
<dbReference type="GO" id="GO:0022625">
    <property type="term" value="C:cytosolic large ribosomal subunit"/>
    <property type="evidence" value="ECO:0000318"/>
    <property type="project" value="GO_Central"/>
</dbReference>
<dbReference type="GO" id="GO:0019843">
    <property type="term" value="F:rRNA binding"/>
    <property type="evidence" value="ECO:0007669"/>
    <property type="project" value="UniProtKB-UniRule"/>
</dbReference>
<dbReference type="GO" id="GO:0003735">
    <property type="term" value="F:structural constituent of ribosome"/>
    <property type="evidence" value="ECO:0000318"/>
    <property type="project" value="GO_Central"/>
</dbReference>
<dbReference type="GO" id="GO:0000027">
    <property type="term" value="P:ribosomal large subunit assembly"/>
    <property type="evidence" value="ECO:0007669"/>
    <property type="project" value="UniProtKB-UniRule"/>
</dbReference>
<dbReference type="GO" id="GO:0006412">
    <property type="term" value="P:translation"/>
    <property type="evidence" value="ECO:0007669"/>
    <property type="project" value="InterPro"/>
</dbReference>
<dbReference type="CDD" id="cd07026">
    <property type="entry name" value="Ribosomal_L20"/>
    <property type="match status" value="1"/>
</dbReference>
<dbReference type="FunFam" id="1.10.1900.20:FF:000001">
    <property type="entry name" value="50S ribosomal protein L20"/>
    <property type="match status" value="1"/>
</dbReference>
<dbReference type="Gene3D" id="6.10.160.10">
    <property type="match status" value="1"/>
</dbReference>
<dbReference type="Gene3D" id="1.10.1900.20">
    <property type="entry name" value="Ribosomal protein L20"/>
    <property type="match status" value="1"/>
</dbReference>
<dbReference type="HAMAP" id="MF_00382">
    <property type="entry name" value="Ribosomal_bL20"/>
    <property type="match status" value="1"/>
</dbReference>
<dbReference type="InterPro" id="IPR005813">
    <property type="entry name" value="Ribosomal_bL20"/>
</dbReference>
<dbReference type="InterPro" id="IPR049946">
    <property type="entry name" value="RIBOSOMAL_L20_CS"/>
</dbReference>
<dbReference type="InterPro" id="IPR035566">
    <property type="entry name" value="Ribosomal_protein_bL20_C"/>
</dbReference>
<dbReference type="NCBIfam" id="TIGR01032">
    <property type="entry name" value="rplT_bact"/>
    <property type="match status" value="1"/>
</dbReference>
<dbReference type="PANTHER" id="PTHR10986">
    <property type="entry name" value="39S RIBOSOMAL PROTEIN L20"/>
    <property type="match status" value="1"/>
</dbReference>
<dbReference type="Pfam" id="PF00453">
    <property type="entry name" value="Ribosomal_L20"/>
    <property type="match status" value="1"/>
</dbReference>
<dbReference type="PRINTS" id="PR00062">
    <property type="entry name" value="RIBOSOMALL20"/>
</dbReference>
<dbReference type="SUPFAM" id="SSF74731">
    <property type="entry name" value="Ribosomal protein L20"/>
    <property type="match status" value="1"/>
</dbReference>
<dbReference type="PROSITE" id="PS00937">
    <property type="entry name" value="RIBOSOMAL_L20"/>
    <property type="match status" value="1"/>
</dbReference>
<accession>O88058</accession>
<evidence type="ECO:0000250" key="1"/>
<evidence type="ECO:0000305" key="2"/>
<protein>
    <recommendedName>
        <fullName evidence="2">Large ribosomal subunit protein bL20</fullName>
    </recommendedName>
    <alternativeName>
        <fullName>50S ribosomal protein L20</fullName>
    </alternativeName>
</protein>
<sequence>MARVKRAVNAHKKRRAILEQASGYRGQRSRLYRKAKEQVTHSLVYNYNDRKKRKGDFRQLWIQRINAAARANGITYNRFIQGLKAANVEVDRKILAELAVNDPNAFAALVEVAQKALPSDVNAPKAA</sequence>
<keyword id="KW-1185">Reference proteome</keyword>
<keyword id="KW-0687">Ribonucleoprotein</keyword>
<keyword id="KW-0689">Ribosomal protein</keyword>
<keyword id="KW-0694">RNA-binding</keyword>
<keyword id="KW-0699">rRNA-binding</keyword>
<feature type="chain" id="PRO_0000177236" description="Large ribosomal subunit protein bL20">
    <location>
        <begin position="1"/>
        <end position="127"/>
    </location>
</feature>
<organism>
    <name type="scientific">Streptomyces coelicolor (strain ATCC BAA-471 / A3(2) / M145)</name>
    <dbReference type="NCBI Taxonomy" id="100226"/>
    <lineage>
        <taxon>Bacteria</taxon>
        <taxon>Bacillati</taxon>
        <taxon>Actinomycetota</taxon>
        <taxon>Actinomycetes</taxon>
        <taxon>Kitasatosporales</taxon>
        <taxon>Streptomycetaceae</taxon>
        <taxon>Streptomyces</taxon>
        <taxon>Streptomyces albidoflavus group</taxon>
    </lineage>
</organism>
<comment type="function">
    <text evidence="1">Binds directly to 23S ribosomal RNA and is necessary for the in vitro assembly process of the 50S ribosomal subunit. It is not involved in the protein synthesizing functions of that subunit (By similarity).</text>
</comment>
<comment type="similarity">
    <text evidence="2">Belongs to the bacterial ribosomal protein bL20 family.</text>
</comment>